<evidence type="ECO:0000250" key="1"/>
<evidence type="ECO:0000256" key="2">
    <source>
        <dbReference type="SAM" id="MobiDB-lite"/>
    </source>
</evidence>
<evidence type="ECO:0000305" key="3"/>
<proteinExistence type="inferred from homology"/>
<accession>Q0JJV1</accession>
<accession>Q5JLT5</accession>
<keyword id="KW-0406">Ion transport</keyword>
<keyword id="KW-0472">Membrane</keyword>
<keyword id="KW-0496">Mitochondrion</keyword>
<keyword id="KW-1000">Mitochondrion outer membrane</keyword>
<keyword id="KW-0626">Porin</keyword>
<keyword id="KW-1185">Reference proteome</keyword>
<keyword id="KW-0812">Transmembrane</keyword>
<keyword id="KW-1134">Transmembrane beta strand</keyword>
<keyword id="KW-0813">Transport</keyword>
<sequence>MEAETECKVPGVYSETGIPVEDPAPGLNSDVSKKDAPPAVAAPGPGLYFEIGKKARDLLYKDFHTDQKFTLTTYTNNGVVITAASTMKDEAIFSEIQTKLKSNNVMLDVKATSDSQVLTTITTEDLGVSGLKQIVSLPFPYQTAGKAELQYLHDYAGISLGVGLTSKPLVNLSGVFGNKSVAVGADVAVDTSTGDFTKYDAGLTINNSDLAADLTLNNKGDSLTASYYHLVNKESGTAAGAELTHSFSTKENTLSFGMQHALDPLTTVKARYNNHGMVSALIQHEWRPKSFLTLSAEVDTKAIDKASKVGLSLVLKP</sequence>
<name>VDAC4_ORYSJ</name>
<protein>
    <recommendedName>
        <fullName>Mitochondrial outer membrane protein porin 4</fullName>
    </recommendedName>
    <alternativeName>
        <fullName>Voltage-dependent anion-selective channel protein 4</fullName>
        <shortName>OsVDAC4</shortName>
    </alternativeName>
</protein>
<organism>
    <name type="scientific">Oryza sativa subsp. japonica</name>
    <name type="common">Rice</name>
    <dbReference type="NCBI Taxonomy" id="39947"/>
    <lineage>
        <taxon>Eukaryota</taxon>
        <taxon>Viridiplantae</taxon>
        <taxon>Streptophyta</taxon>
        <taxon>Embryophyta</taxon>
        <taxon>Tracheophyta</taxon>
        <taxon>Spermatophyta</taxon>
        <taxon>Magnoliopsida</taxon>
        <taxon>Liliopsida</taxon>
        <taxon>Poales</taxon>
        <taxon>Poaceae</taxon>
        <taxon>BOP clade</taxon>
        <taxon>Oryzoideae</taxon>
        <taxon>Oryzeae</taxon>
        <taxon>Oryzinae</taxon>
        <taxon>Oryza</taxon>
        <taxon>Oryza sativa</taxon>
    </lineage>
</organism>
<dbReference type="EMBL" id="AP003288">
    <property type="protein sequence ID" value="BAD87377.1"/>
    <property type="status" value="ALT_SEQ"/>
    <property type="molecule type" value="Genomic_DNA"/>
</dbReference>
<dbReference type="EMBL" id="AP003408">
    <property type="protein sequence ID" value="BAD87575.1"/>
    <property type="status" value="ALT_SEQ"/>
    <property type="molecule type" value="Genomic_DNA"/>
</dbReference>
<dbReference type="EMBL" id="AP008207">
    <property type="protein sequence ID" value="BAF05977.2"/>
    <property type="status" value="ALT_SEQ"/>
    <property type="molecule type" value="Genomic_DNA"/>
</dbReference>
<dbReference type="EMBL" id="AP014957">
    <property type="status" value="NOT_ANNOTATED_CDS"/>
    <property type="molecule type" value="Genomic_DNA"/>
</dbReference>
<dbReference type="RefSeq" id="XP_015649687.1">
    <property type="nucleotide sequence ID" value="XM_015794201.1"/>
</dbReference>
<dbReference type="SMR" id="Q0JJV1"/>
<dbReference type="FunCoup" id="Q0JJV1">
    <property type="interactions" value="2487"/>
</dbReference>
<dbReference type="STRING" id="39947.Q0JJV1"/>
<dbReference type="TCDB" id="1.B.8.1.8">
    <property type="family name" value="the mitochondrial and plastid porin (mpp) family"/>
</dbReference>
<dbReference type="PaxDb" id="39947-Q0JJV1"/>
<dbReference type="KEGG" id="dosa:Os01g0715500"/>
<dbReference type="eggNOG" id="KOG3126">
    <property type="taxonomic scope" value="Eukaryota"/>
</dbReference>
<dbReference type="HOGENOM" id="CLU_069937_1_0_1"/>
<dbReference type="InParanoid" id="Q0JJV1"/>
<dbReference type="OrthoDB" id="7827681at2759"/>
<dbReference type="Proteomes" id="UP000000763">
    <property type="component" value="Chromosome 1"/>
</dbReference>
<dbReference type="Proteomes" id="UP000059680">
    <property type="component" value="Chromosome 1"/>
</dbReference>
<dbReference type="GO" id="GO:0005741">
    <property type="term" value="C:mitochondrial outer membrane"/>
    <property type="evidence" value="ECO:0000318"/>
    <property type="project" value="GO_Central"/>
</dbReference>
<dbReference type="GO" id="GO:0046930">
    <property type="term" value="C:pore complex"/>
    <property type="evidence" value="ECO:0007669"/>
    <property type="project" value="UniProtKB-KW"/>
</dbReference>
<dbReference type="GO" id="GO:0015288">
    <property type="term" value="F:porin activity"/>
    <property type="evidence" value="ECO:0007669"/>
    <property type="project" value="UniProtKB-KW"/>
</dbReference>
<dbReference type="GO" id="GO:0008308">
    <property type="term" value="F:voltage-gated monoatomic anion channel activity"/>
    <property type="evidence" value="ECO:0000318"/>
    <property type="project" value="GO_Central"/>
</dbReference>
<dbReference type="CDD" id="cd07306">
    <property type="entry name" value="Porin3_VDAC"/>
    <property type="match status" value="1"/>
</dbReference>
<dbReference type="FunFam" id="2.40.160.10:FF:000003">
    <property type="entry name" value="Outer mitochondrial membrane protein porin"/>
    <property type="match status" value="1"/>
</dbReference>
<dbReference type="Gene3D" id="2.40.160.10">
    <property type="entry name" value="Porin"/>
    <property type="match status" value="1"/>
</dbReference>
<dbReference type="InterPro" id="IPR023614">
    <property type="entry name" value="Porin_dom_sf"/>
</dbReference>
<dbReference type="InterPro" id="IPR001925">
    <property type="entry name" value="Porin_Euk"/>
</dbReference>
<dbReference type="InterPro" id="IPR027246">
    <property type="entry name" value="Porin_Euk/Tom40"/>
</dbReference>
<dbReference type="PANTHER" id="PTHR11743:SF30">
    <property type="entry name" value="MITOCHONDRIAL OUTER MEMBRANE PROTEIN PORIN 4"/>
    <property type="match status" value="1"/>
</dbReference>
<dbReference type="PANTHER" id="PTHR11743">
    <property type="entry name" value="VOLTAGE-DEPENDENT ANION-SELECTIVE CHANNEL"/>
    <property type="match status" value="1"/>
</dbReference>
<dbReference type="Pfam" id="PF01459">
    <property type="entry name" value="Porin_3"/>
    <property type="match status" value="1"/>
</dbReference>
<reference key="1">
    <citation type="journal article" date="2002" name="Nature">
        <title>The genome sequence and structure of rice chromosome 1.</title>
        <authorList>
            <person name="Sasaki T."/>
            <person name="Matsumoto T."/>
            <person name="Yamamoto K."/>
            <person name="Sakata K."/>
            <person name="Baba T."/>
            <person name="Katayose Y."/>
            <person name="Wu J."/>
            <person name="Niimura Y."/>
            <person name="Cheng Z."/>
            <person name="Nagamura Y."/>
            <person name="Antonio B.A."/>
            <person name="Kanamori H."/>
            <person name="Hosokawa S."/>
            <person name="Masukawa M."/>
            <person name="Arikawa K."/>
            <person name="Chiden Y."/>
            <person name="Hayashi M."/>
            <person name="Okamoto M."/>
            <person name="Ando T."/>
            <person name="Aoki H."/>
            <person name="Arita K."/>
            <person name="Hamada M."/>
            <person name="Harada C."/>
            <person name="Hijishita S."/>
            <person name="Honda M."/>
            <person name="Ichikawa Y."/>
            <person name="Idonuma A."/>
            <person name="Iijima M."/>
            <person name="Ikeda M."/>
            <person name="Ikeno M."/>
            <person name="Ito S."/>
            <person name="Ito T."/>
            <person name="Ito Y."/>
            <person name="Ito Y."/>
            <person name="Iwabuchi A."/>
            <person name="Kamiya K."/>
            <person name="Karasawa W."/>
            <person name="Katagiri S."/>
            <person name="Kikuta A."/>
            <person name="Kobayashi N."/>
            <person name="Kono I."/>
            <person name="Machita K."/>
            <person name="Maehara T."/>
            <person name="Mizuno H."/>
            <person name="Mizubayashi T."/>
            <person name="Mukai Y."/>
            <person name="Nagasaki H."/>
            <person name="Nakashima M."/>
            <person name="Nakama Y."/>
            <person name="Nakamichi Y."/>
            <person name="Nakamura M."/>
            <person name="Namiki N."/>
            <person name="Negishi M."/>
            <person name="Ohta I."/>
            <person name="Ono N."/>
            <person name="Saji S."/>
            <person name="Sakai K."/>
            <person name="Shibata M."/>
            <person name="Shimokawa T."/>
            <person name="Shomura A."/>
            <person name="Song J."/>
            <person name="Takazaki Y."/>
            <person name="Terasawa K."/>
            <person name="Tsuji K."/>
            <person name="Waki K."/>
            <person name="Yamagata H."/>
            <person name="Yamane H."/>
            <person name="Yoshiki S."/>
            <person name="Yoshihara R."/>
            <person name="Yukawa K."/>
            <person name="Zhong H."/>
            <person name="Iwama H."/>
            <person name="Endo T."/>
            <person name="Ito H."/>
            <person name="Hahn J.H."/>
            <person name="Kim H.-I."/>
            <person name="Eun M.-Y."/>
            <person name="Yano M."/>
            <person name="Jiang J."/>
            <person name="Gojobori T."/>
        </authorList>
    </citation>
    <scope>NUCLEOTIDE SEQUENCE [LARGE SCALE GENOMIC DNA]</scope>
    <source>
        <strain>cv. Nipponbare</strain>
    </source>
</reference>
<reference key="2">
    <citation type="journal article" date="2005" name="Nature">
        <title>The map-based sequence of the rice genome.</title>
        <authorList>
            <consortium name="International rice genome sequencing project (IRGSP)"/>
        </authorList>
    </citation>
    <scope>NUCLEOTIDE SEQUENCE [LARGE SCALE GENOMIC DNA]</scope>
    <source>
        <strain>cv. Nipponbare</strain>
    </source>
</reference>
<reference key="3">
    <citation type="journal article" date="2013" name="Rice">
        <title>Improvement of the Oryza sativa Nipponbare reference genome using next generation sequence and optical map data.</title>
        <authorList>
            <person name="Kawahara Y."/>
            <person name="de la Bastide M."/>
            <person name="Hamilton J.P."/>
            <person name="Kanamori H."/>
            <person name="McCombie W.R."/>
            <person name="Ouyang S."/>
            <person name="Schwartz D.C."/>
            <person name="Tanaka T."/>
            <person name="Wu J."/>
            <person name="Zhou S."/>
            <person name="Childs K.L."/>
            <person name="Davidson R.M."/>
            <person name="Lin H."/>
            <person name="Quesada-Ocampo L."/>
            <person name="Vaillancourt B."/>
            <person name="Sakai H."/>
            <person name="Lee S.S."/>
            <person name="Kim J."/>
            <person name="Numa H."/>
            <person name="Itoh T."/>
            <person name="Buell C.R."/>
            <person name="Matsumoto T."/>
        </authorList>
    </citation>
    <scope>GENOME REANNOTATION</scope>
    <source>
        <strain>cv. Nipponbare</strain>
    </source>
</reference>
<gene>
    <name type="primary">VDAC4</name>
    <name type="ordered locus">Os01g0715500</name>
    <name type="ordered locus">LOC_Os01g51170</name>
    <name type="ORF">B1131B07.20</name>
    <name type="ORF">P0683B11.1</name>
</gene>
<feature type="chain" id="PRO_0000414087" description="Mitochondrial outer membrane protein porin 4">
    <location>
        <begin position="1"/>
        <end position="317"/>
    </location>
</feature>
<feature type="region of interest" description="Disordered" evidence="2">
    <location>
        <begin position="1"/>
        <end position="30"/>
    </location>
</feature>
<comment type="function">
    <text evidence="1">Forms a channel through the mitochondrial outer membrane that allows diffusion of small hydrophilic molecules. The channel adopts an open conformation at low or zero membrane potential and a closed conformation at potentials above 30-40 mV. The open state has a weak anion selectivity whereas the closed state is cation-selective (By similarity).</text>
</comment>
<comment type="subcellular location">
    <subcellularLocation>
        <location evidence="1">Mitochondrion outer membrane</location>
    </subcellularLocation>
</comment>
<comment type="domain">
    <text>Consists mainly of membrane-spanning sided beta-sheets.</text>
</comment>
<comment type="similarity">
    <text evidence="3">Belongs to the eukaryotic mitochondrial porin (TC 1.B.8.1) family.</text>
</comment>
<comment type="sequence caution" evidence="3">
    <conflict type="erroneous gene model prediction">
        <sequence resource="EMBL-CDS" id="BAD87377"/>
    </conflict>
</comment>
<comment type="sequence caution" evidence="3">
    <conflict type="erroneous gene model prediction">
        <sequence resource="EMBL-CDS" id="BAD87575"/>
    </conflict>
</comment>
<comment type="sequence caution" evidence="3">
    <conflict type="erroneous gene model prediction">
        <sequence resource="EMBL-CDS" id="BAF05977"/>
    </conflict>
</comment>